<dbReference type="EC" id="3.6.-.-" evidence="1"/>
<dbReference type="EMBL" id="CP000388">
    <property type="protein sequence ID" value="ABG42809.1"/>
    <property type="molecule type" value="Genomic_DNA"/>
</dbReference>
<dbReference type="RefSeq" id="WP_011576988.1">
    <property type="nucleotide sequence ID" value="NC_008228.1"/>
</dbReference>
<dbReference type="SMR" id="Q15MS9"/>
<dbReference type="STRING" id="342610.Patl_4310"/>
<dbReference type="KEGG" id="pat:Patl_4310"/>
<dbReference type="eggNOG" id="COG0486">
    <property type="taxonomic scope" value="Bacteria"/>
</dbReference>
<dbReference type="HOGENOM" id="CLU_019624_4_1_6"/>
<dbReference type="OrthoDB" id="9805918at2"/>
<dbReference type="Proteomes" id="UP000001981">
    <property type="component" value="Chromosome"/>
</dbReference>
<dbReference type="GO" id="GO:0005829">
    <property type="term" value="C:cytosol"/>
    <property type="evidence" value="ECO:0007669"/>
    <property type="project" value="TreeGrafter"/>
</dbReference>
<dbReference type="GO" id="GO:0005525">
    <property type="term" value="F:GTP binding"/>
    <property type="evidence" value="ECO:0007669"/>
    <property type="project" value="UniProtKB-UniRule"/>
</dbReference>
<dbReference type="GO" id="GO:0003924">
    <property type="term" value="F:GTPase activity"/>
    <property type="evidence" value="ECO:0007669"/>
    <property type="project" value="UniProtKB-UniRule"/>
</dbReference>
<dbReference type="GO" id="GO:0046872">
    <property type="term" value="F:metal ion binding"/>
    <property type="evidence" value="ECO:0007669"/>
    <property type="project" value="UniProtKB-KW"/>
</dbReference>
<dbReference type="GO" id="GO:0030488">
    <property type="term" value="P:tRNA methylation"/>
    <property type="evidence" value="ECO:0007669"/>
    <property type="project" value="TreeGrafter"/>
</dbReference>
<dbReference type="GO" id="GO:0002098">
    <property type="term" value="P:tRNA wobble uridine modification"/>
    <property type="evidence" value="ECO:0007669"/>
    <property type="project" value="TreeGrafter"/>
</dbReference>
<dbReference type="CDD" id="cd04164">
    <property type="entry name" value="trmE"/>
    <property type="match status" value="1"/>
</dbReference>
<dbReference type="CDD" id="cd14858">
    <property type="entry name" value="TrmE_N"/>
    <property type="match status" value="1"/>
</dbReference>
<dbReference type="FunFam" id="3.30.1360.120:FF:000001">
    <property type="entry name" value="tRNA modification GTPase MnmE"/>
    <property type="match status" value="1"/>
</dbReference>
<dbReference type="FunFam" id="3.40.50.300:FF:000249">
    <property type="entry name" value="tRNA modification GTPase MnmE"/>
    <property type="match status" value="1"/>
</dbReference>
<dbReference type="Gene3D" id="3.40.50.300">
    <property type="entry name" value="P-loop containing nucleotide triphosphate hydrolases"/>
    <property type="match status" value="1"/>
</dbReference>
<dbReference type="Gene3D" id="3.30.1360.120">
    <property type="entry name" value="Probable tRNA modification gtpase trme, domain 1"/>
    <property type="match status" value="1"/>
</dbReference>
<dbReference type="Gene3D" id="1.20.120.430">
    <property type="entry name" value="tRNA modification GTPase MnmE domain 2"/>
    <property type="match status" value="1"/>
</dbReference>
<dbReference type="HAMAP" id="MF_00379">
    <property type="entry name" value="GTPase_MnmE"/>
    <property type="match status" value="1"/>
</dbReference>
<dbReference type="InterPro" id="IPR031168">
    <property type="entry name" value="G_TrmE"/>
</dbReference>
<dbReference type="InterPro" id="IPR006073">
    <property type="entry name" value="GTP-bd"/>
</dbReference>
<dbReference type="InterPro" id="IPR018948">
    <property type="entry name" value="GTP-bd_TrmE_N"/>
</dbReference>
<dbReference type="InterPro" id="IPR004520">
    <property type="entry name" value="GTPase_MnmE"/>
</dbReference>
<dbReference type="InterPro" id="IPR027368">
    <property type="entry name" value="MnmE_dom2"/>
</dbReference>
<dbReference type="InterPro" id="IPR025867">
    <property type="entry name" value="MnmE_helical"/>
</dbReference>
<dbReference type="InterPro" id="IPR027417">
    <property type="entry name" value="P-loop_NTPase"/>
</dbReference>
<dbReference type="InterPro" id="IPR005225">
    <property type="entry name" value="Small_GTP-bd"/>
</dbReference>
<dbReference type="InterPro" id="IPR027266">
    <property type="entry name" value="TrmE/GcvT_dom1"/>
</dbReference>
<dbReference type="NCBIfam" id="TIGR00450">
    <property type="entry name" value="mnmE_trmE_thdF"/>
    <property type="match status" value="1"/>
</dbReference>
<dbReference type="NCBIfam" id="NF003661">
    <property type="entry name" value="PRK05291.1-3"/>
    <property type="match status" value="1"/>
</dbReference>
<dbReference type="NCBIfam" id="TIGR00231">
    <property type="entry name" value="small_GTP"/>
    <property type="match status" value="1"/>
</dbReference>
<dbReference type="PANTHER" id="PTHR42714">
    <property type="entry name" value="TRNA MODIFICATION GTPASE GTPBP3"/>
    <property type="match status" value="1"/>
</dbReference>
<dbReference type="PANTHER" id="PTHR42714:SF2">
    <property type="entry name" value="TRNA MODIFICATION GTPASE GTPBP3, MITOCHONDRIAL"/>
    <property type="match status" value="1"/>
</dbReference>
<dbReference type="Pfam" id="PF01926">
    <property type="entry name" value="MMR_HSR1"/>
    <property type="match status" value="1"/>
</dbReference>
<dbReference type="Pfam" id="PF12631">
    <property type="entry name" value="MnmE_helical"/>
    <property type="match status" value="1"/>
</dbReference>
<dbReference type="Pfam" id="PF10396">
    <property type="entry name" value="TrmE_N"/>
    <property type="match status" value="1"/>
</dbReference>
<dbReference type="SUPFAM" id="SSF52540">
    <property type="entry name" value="P-loop containing nucleoside triphosphate hydrolases"/>
    <property type="match status" value="1"/>
</dbReference>
<dbReference type="SUPFAM" id="SSF116878">
    <property type="entry name" value="TrmE connector domain"/>
    <property type="match status" value="1"/>
</dbReference>
<dbReference type="PROSITE" id="PS51709">
    <property type="entry name" value="G_TRME"/>
    <property type="match status" value="1"/>
</dbReference>
<comment type="function">
    <text evidence="1">Exhibits a very high intrinsic GTPase hydrolysis rate. Involved in the addition of a carboxymethylaminomethyl (cmnm) group at the wobble position (U34) of certain tRNAs, forming tRNA-cmnm(5)s(2)U34.</text>
</comment>
<comment type="cofactor">
    <cofactor evidence="1">
        <name>K(+)</name>
        <dbReference type="ChEBI" id="CHEBI:29103"/>
    </cofactor>
    <text evidence="1">Binds 1 potassium ion per subunit.</text>
</comment>
<comment type="subunit">
    <text evidence="1">Homodimer. Heterotetramer of two MnmE and two MnmG subunits.</text>
</comment>
<comment type="subcellular location">
    <subcellularLocation>
        <location evidence="1">Cytoplasm</location>
    </subcellularLocation>
</comment>
<comment type="similarity">
    <text evidence="1">Belongs to the TRAFAC class TrmE-Era-EngA-EngB-Septin-like GTPase superfamily. TrmE GTPase family.</text>
</comment>
<name>MNME_PSEA6</name>
<sequence>MTVEQNTPDQDTIVAQATASGRGGVGIVRVSGSLAAKVAEQIIGHVPLIRNAQYVPFKSNTGEPLDQGIALFFKAPHSFTGEDVLELQGHGGQVVLDMLIKATLHVPNVRLARPGEFSERAYLNDKLDLAQAEAIADLIDASSEQAARGALRSLQGEFSTQINSLVELLTHLRIYVEAAIDFPDEEIDFLSDGKVQNDLKAITKQLSSVKSQARQGSLLREGMRVVIAGRPNAGKSSLLNALAGRDAAIVTAIAGTTRDVLKEHIHIDGMPLHIIDTAGLRDSSDEVERIGIERAWQEIEQADRVLFMLDSTETHENDPYKIWPEFMRRLPKNMGLTVIRNKADLSGENVGKVQYDDYPVFQLSASHKQGIEVLAEHLKECMGFHSSNEGQFIARRRHIDAIERAEEHLLLGKQQLEDNLAGELLAEELRLAQAYLSEITGEFSSDDLLGKIFSSFCIGK</sequence>
<proteinExistence type="inferred from homology"/>
<keyword id="KW-0963">Cytoplasm</keyword>
<keyword id="KW-0342">GTP-binding</keyword>
<keyword id="KW-0378">Hydrolase</keyword>
<keyword id="KW-0460">Magnesium</keyword>
<keyword id="KW-0479">Metal-binding</keyword>
<keyword id="KW-0547">Nucleotide-binding</keyword>
<keyword id="KW-0630">Potassium</keyword>
<keyword id="KW-0819">tRNA processing</keyword>
<feature type="chain" id="PRO_0000345874" description="tRNA modification GTPase MnmE">
    <location>
        <begin position="1"/>
        <end position="460"/>
    </location>
</feature>
<feature type="domain" description="TrmE-type G">
    <location>
        <begin position="222"/>
        <end position="383"/>
    </location>
</feature>
<feature type="binding site" evidence="1">
    <location>
        <position position="29"/>
    </location>
    <ligand>
        <name>(6S)-5-formyl-5,6,7,8-tetrahydrofolate</name>
        <dbReference type="ChEBI" id="CHEBI:57457"/>
    </ligand>
</feature>
<feature type="binding site" evidence="1">
    <location>
        <position position="86"/>
    </location>
    <ligand>
        <name>(6S)-5-formyl-5,6,7,8-tetrahydrofolate</name>
        <dbReference type="ChEBI" id="CHEBI:57457"/>
    </ligand>
</feature>
<feature type="binding site" evidence="1">
    <location>
        <position position="126"/>
    </location>
    <ligand>
        <name>(6S)-5-formyl-5,6,7,8-tetrahydrofolate</name>
        <dbReference type="ChEBI" id="CHEBI:57457"/>
    </ligand>
</feature>
<feature type="binding site" evidence="1">
    <location>
        <begin position="232"/>
        <end position="237"/>
    </location>
    <ligand>
        <name>GTP</name>
        <dbReference type="ChEBI" id="CHEBI:37565"/>
    </ligand>
</feature>
<feature type="binding site" evidence="1">
    <location>
        <position position="232"/>
    </location>
    <ligand>
        <name>K(+)</name>
        <dbReference type="ChEBI" id="CHEBI:29103"/>
    </ligand>
</feature>
<feature type="binding site" evidence="1">
    <location>
        <position position="236"/>
    </location>
    <ligand>
        <name>Mg(2+)</name>
        <dbReference type="ChEBI" id="CHEBI:18420"/>
    </ligand>
</feature>
<feature type="binding site" evidence="1">
    <location>
        <begin position="251"/>
        <end position="257"/>
    </location>
    <ligand>
        <name>GTP</name>
        <dbReference type="ChEBI" id="CHEBI:37565"/>
    </ligand>
</feature>
<feature type="binding site" evidence="1">
    <location>
        <position position="251"/>
    </location>
    <ligand>
        <name>K(+)</name>
        <dbReference type="ChEBI" id="CHEBI:29103"/>
    </ligand>
</feature>
<feature type="binding site" evidence="1">
    <location>
        <position position="253"/>
    </location>
    <ligand>
        <name>K(+)</name>
        <dbReference type="ChEBI" id="CHEBI:29103"/>
    </ligand>
</feature>
<feature type="binding site" evidence="1">
    <location>
        <position position="256"/>
    </location>
    <ligand>
        <name>K(+)</name>
        <dbReference type="ChEBI" id="CHEBI:29103"/>
    </ligand>
</feature>
<feature type="binding site" evidence="1">
    <location>
        <position position="257"/>
    </location>
    <ligand>
        <name>Mg(2+)</name>
        <dbReference type="ChEBI" id="CHEBI:18420"/>
    </ligand>
</feature>
<feature type="binding site" evidence="1">
    <location>
        <begin position="276"/>
        <end position="279"/>
    </location>
    <ligand>
        <name>GTP</name>
        <dbReference type="ChEBI" id="CHEBI:37565"/>
    </ligand>
</feature>
<feature type="binding site" evidence="1">
    <location>
        <begin position="341"/>
        <end position="344"/>
    </location>
    <ligand>
        <name>GTP</name>
        <dbReference type="ChEBI" id="CHEBI:37565"/>
    </ligand>
</feature>
<feature type="binding site" evidence="1">
    <location>
        <position position="460"/>
    </location>
    <ligand>
        <name>(6S)-5-formyl-5,6,7,8-tetrahydrofolate</name>
        <dbReference type="ChEBI" id="CHEBI:57457"/>
    </ligand>
</feature>
<gene>
    <name evidence="1" type="primary">mnmE</name>
    <name evidence="1" type="synonym">trmE</name>
    <name type="ordered locus">Patl_4310</name>
</gene>
<accession>Q15MS9</accession>
<reference key="1">
    <citation type="submission" date="2006-06" db="EMBL/GenBank/DDBJ databases">
        <title>Complete sequence of Pseudoalteromonas atlantica T6c.</title>
        <authorList>
            <consortium name="US DOE Joint Genome Institute"/>
            <person name="Copeland A."/>
            <person name="Lucas S."/>
            <person name="Lapidus A."/>
            <person name="Barry K."/>
            <person name="Detter J.C."/>
            <person name="Glavina del Rio T."/>
            <person name="Hammon N."/>
            <person name="Israni S."/>
            <person name="Dalin E."/>
            <person name="Tice H."/>
            <person name="Pitluck S."/>
            <person name="Saunders E."/>
            <person name="Brettin T."/>
            <person name="Bruce D."/>
            <person name="Han C."/>
            <person name="Tapia R."/>
            <person name="Gilna P."/>
            <person name="Schmutz J."/>
            <person name="Larimer F."/>
            <person name="Land M."/>
            <person name="Hauser L."/>
            <person name="Kyrpides N."/>
            <person name="Kim E."/>
            <person name="Karls A.C."/>
            <person name="Bartlett D."/>
            <person name="Higgins B.P."/>
            <person name="Richardson P."/>
        </authorList>
    </citation>
    <scope>NUCLEOTIDE SEQUENCE [LARGE SCALE GENOMIC DNA]</scope>
    <source>
        <strain>T6c / ATCC BAA-1087</strain>
    </source>
</reference>
<organism>
    <name type="scientific">Pseudoalteromonas atlantica (strain T6c / ATCC BAA-1087)</name>
    <dbReference type="NCBI Taxonomy" id="3042615"/>
    <lineage>
        <taxon>Bacteria</taxon>
        <taxon>Pseudomonadati</taxon>
        <taxon>Pseudomonadota</taxon>
        <taxon>Gammaproteobacteria</taxon>
        <taxon>Alteromonadales</taxon>
        <taxon>Alteromonadaceae</taxon>
        <taxon>Paraglaciecola</taxon>
    </lineage>
</organism>
<evidence type="ECO:0000255" key="1">
    <source>
        <dbReference type="HAMAP-Rule" id="MF_00379"/>
    </source>
</evidence>
<protein>
    <recommendedName>
        <fullName evidence="1">tRNA modification GTPase MnmE</fullName>
        <ecNumber evidence="1">3.6.-.-</ecNumber>
    </recommendedName>
</protein>